<name>RL25_DESOH</name>
<proteinExistence type="inferred from homology"/>
<dbReference type="EMBL" id="CP000859">
    <property type="protein sequence ID" value="ABW68621.1"/>
    <property type="molecule type" value="Genomic_DNA"/>
</dbReference>
<dbReference type="RefSeq" id="WP_012176232.1">
    <property type="nucleotide sequence ID" value="NC_009943.1"/>
</dbReference>
<dbReference type="SMR" id="A8ZXZ4"/>
<dbReference type="STRING" id="96561.Dole_2818"/>
<dbReference type="KEGG" id="dol:Dole_2818"/>
<dbReference type="eggNOG" id="COG1825">
    <property type="taxonomic scope" value="Bacteria"/>
</dbReference>
<dbReference type="HOGENOM" id="CLU_075939_2_1_7"/>
<dbReference type="OrthoDB" id="9786489at2"/>
<dbReference type="Proteomes" id="UP000008561">
    <property type="component" value="Chromosome"/>
</dbReference>
<dbReference type="GO" id="GO:0022625">
    <property type="term" value="C:cytosolic large ribosomal subunit"/>
    <property type="evidence" value="ECO:0007669"/>
    <property type="project" value="TreeGrafter"/>
</dbReference>
<dbReference type="GO" id="GO:0008097">
    <property type="term" value="F:5S rRNA binding"/>
    <property type="evidence" value="ECO:0007669"/>
    <property type="project" value="InterPro"/>
</dbReference>
<dbReference type="GO" id="GO:0003735">
    <property type="term" value="F:structural constituent of ribosome"/>
    <property type="evidence" value="ECO:0007669"/>
    <property type="project" value="InterPro"/>
</dbReference>
<dbReference type="GO" id="GO:0006412">
    <property type="term" value="P:translation"/>
    <property type="evidence" value="ECO:0007669"/>
    <property type="project" value="UniProtKB-UniRule"/>
</dbReference>
<dbReference type="CDD" id="cd00495">
    <property type="entry name" value="Ribosomal_L25_TL5_CTC"/>
    <property type="match status" value="1"/>
</dbReference>
<dbReference type="Gene3D" id="2.170.120.20">
    <property type="entry name" value="Ribosomal protein L25, beta domain"/>
    <property type="match status" value="1"/>
</dbReference>
<dbReference type="Gene3D" id="2.40.240.10">
    <property type="entry name" value="Ribosomal Protein L25, Chain P"/>
    <property type="match status" value="1"/>
</dbReference>
<dbReference type="HAMAP" id="MF_01334">
    <property type="entry name" value="Ribosomal_bL25_CTC"/>
    <property type="match status" value="1"/>
</dbReference>
<dbReference type="InterPro" id="IPR020056">
    <property type="entry name" value="Rbsml_bL25/Gln-tRNA_synth_N"/>
</dbReference>
<dbReference type="InterPro" id="IPR011035">
    <property type="entry name" value="Ribosomal_bL25/Gln-tRNA_synth"/>
</dbReference>
<dbReference type="InterPro" id="IPR020057">
    <property type="entry name" value="Ribosomal_bL25_b-dom"/>
</dbReference>
<dbReference type="InterPro" id="IPR037121">
    <property type="entry name" value="Ribosomal_bL25_C"/>
</dbReference>
<dbReference type="InterPro" id="IPR001021">
    <property type="entry name" value="Ribosomal_bL25_long"/>
</dbReference>
<dbReference type="InterPro" id="IPR029751">
    <property type="entry name" value="Ribosomal_L25_dom"/>
</dbReference>
<dbReference type="InterPro" id="IPR020930">
    <property type="entry name" value="Ribosomal_uL5_bac-type"/>
</dbReference>
<dbReference type="NCBIfam" id="TIGR00731">
    <property type="entry name" value="bL25_bact_ctc"/>
    <property type="match status" value="1"/>
</dbReference>
<dbReference type="PANTHER" id="PTHR33284">
    <property type="entry name" value="RIBOSOMAL PROTEIN L25/GLN-TRNA SYNTHETASE, ANTI-CODON-BINDING DOMAIN-CONTAINING PROTEIN"/>
    <property type="match status" value="1"/>
</dbReference>
<dbReference type="PANTHER" id="PTHR33284:SF1">
    <property type="entry name" value="RIBOSOMAL PROTEIN L25_GLN-TRNA SYNTHETASE, ANTI-CODON-BINDING DOMAIN-CONTAINING PROTEIN"/>
    <property type="match status" value="1"/>
</dbReference>
<dbReference type="Pfam" id="PF01386">
    <property type="entry name" value="Ribosomal_L25p"/>
    <property type="match status" value="1"/>
</dbReference>
<dbReference type="Pfam" id="PF14693">
    <property type="entry name" value="Ribosomal_TL5_C"/>
    <property type="match status" value="1"/>
</dbReference>
<dbReference type="SUPFAM" id="SSF50715">
    <property type="entry name" value="Ribosomal protein L25-like"/>
    <property type="match status" value="1"/>
</dbReference>
<feature type="chain" id="PRO_1000142516" description="Large ribosomal subunit protein bL25">
    <location>
        <begin position="1"/>
        <end position="217"/>
    </location>
</feature>
<feature type="region of interest" description="Disordered" evidence="2">
    <location>
        <begin position="185"/>
        <end position="217"/>
    </location>
</feature>
<feature type="compositionally biased region" description="Acidic residues" evidence="2">
    <location>
        <begin position="189"/>
        <end position="217"/>
    </location>
</feature>
<accession>A8ZXZ4</accession>
<organism>
    <name type="scientific">Desulfosudis oleivorans (strain DSM 6200 / JCM 39069 / Hxd3)</name>
    <name type="common">Desulfococcus oleovorans</name>
    <dbReference type="NCBI Taxonomy" id="96561"/>
    <lineage>
        <taxon>Bacteria</taxon>
        <taxon>Pseudomonadati</taxon>
        <taxon>Thermodesulfobacteriota</taxon>
        <taxon>Desulfobacteria</taxon>
        <taxon>Desulfobacterales</taxon>
        <taxon>Desulfosudaceae</taxon>
        <taxon>Desulfosudis</taxon>
    </lineage>
</organism>
<protein>
    <recommendedName>
        <fullName evidence="1">Large ribosomal subunit protein bL25</fullName>
    </recommendedName>
    <alternativeName>
        <fullName evidence="3">50S ribosomal protein L25</fullName>
    </alternativeName>
    <alternativeName>
        <fullName evidence="1">General stress protein CTC</fullName>
    </alternativeName>
</protein>
<reference key="1">
    <citation type="submission" date="2007-10" db="EMBL/GenBank/DDBJ databases">
        <title>Complete sequence of Desulfococcus oleovorans Hxd3.</title>
        <authorList>
            <consortium name="US DOE Joint Genome Institute"/>
            <person name="Copeland A."/>
            <person name="Lucas S."/>
            <person name="Lapidus A."/>
            <person name="Barry K."/>
            <person name="Glavina del Rio T."/>
            <person name="Dalin E."/>
            <person name="Tice H."/>
            <person name="Pitluck S."/>
            <person name="Kiss H."/>
            <person name="Brettin T."/>
            <person name="Bruce D."/>
            <person name="Detter J.C."/>
            <person name="Han C."/>
            <person name="Schmutz J."/>
            <person name="Larimer F."/>
            <person name="Land M."/>
            <person name="Hauser L."/>
            <person name="Kyrpides N."/>
            <person name="Kim E."/>
            <person name="Wawrik B."/>
            <person name="Richardson P."/>
        </authorList>
    </citation>
    <scope>NUCLEOTIDE SEQUENCE [LARGE SCALE GENOMIC DNA]</scope>
    <source>
        <strain>DSM 6200 / JCM 39069 / Hxd3</strain>
    </source>
</reference>
<keyword id="KW-1185">Reference proteome</keyword>
<keyword id="KW-0687">Ribonucleoprotein</keyword>
<keyword id="KW-0689">Ribosomal protein</keyword>
<keyword id="KW-0694">RNA-binding</keyword>
<keyword id="KW-0699">rRNA-binding</keyword>
<gene>
    <name evidence="1" type="primary">rplY</name>
    <name evidence="1" type="synonym">ctc</name>
    <name type="ordered locus">Dole_2818</name>
</gene>
<sequence length="217" mass="23343">MELKELQVKTRQMAGGPTPKALRRQGFVPAIVYGHKNDPLPLAVDDHTFRLLLKDAGQQALLSLVIDDGAASKTVMLKELQQHPVSLKLIHADFHEVDLTKKITTYVPVATTGVCKGEKEGGVLQLIRRELEVRCLPGLIPESIAIDISALDIGDSVHVADIEAPEGVELVHEVNFTVIAVAAPTKETVEDEEAEEAAAEGAEETGETGETEEGGDE</sequence>
<evidence type="ECO:0000255" key="1">
    <source>
        <dbReference type="HAMAP-Rule" id="MF_01334"/>
    </source>
</evidence>
<evidence type="ECO:0000256" key="2">
    <source>
        <dbReference type="SAM" id="MobiDB-lite"/>
    </source>
</evidence>
<evidence type="ECO:0000305" key="3"/>
<comment type="function">
    <text evidence="1">This is one of the proteins that binds to the 5S RNA in the ribosome where it forms part of the central protuberance.</text>
</comment>
<comment type="subunit">
    <text evidence="1">Part of the 50S ribosomal subunit; part of the 5S rRNA/L5/L18/L25 subcomplex. Contacts the 5S rRNA. Binds to the 5S rRNA independently of L5 and L18.</text>
</comment>
<comment type="similarity">
    <text evidence="1">Belongs to the bacterial ribosomal protein bL25 family. CTC subfamily.</text>
</comment>